<evidence type="ECO:0000255" key="1">
    <source>
        <dbReference type="HAMAP-Rule" id="MF_00337"/>
    </source>
</evidence>
<evidence type="ECO:0000305" key="2"/>
<name>EX7S_RHILO</name>
<comment type="function">
    <text evidence="1">Bidirectionally degrades single-stranded DNA into large acid-insoluble oligonucleotides, which are then degraded further into small acid-soluble oligonucleotides.</text>
</comment>
<comment type="catalytic activity">
    <reaction evidence="1">
        <text>Exonucleolytic cleavage in either 5'- to 3'- or 3'- to 5'-direction to yield nucleoside 5'-phosphates.</text>
        <dbReference type="EC" id="3.1.11.6"/>
    </reaction>
</comment>
<comment type="subunit">
    <text evidence="1">Heterooligomer composed of large and small subunits.</text>
</comment>
<comment type="subcellular location">
    <subcellularLocation>
        <location evidence="1">Cytoplasm</location>
    </subcellularLocation>
</comment>
<comment type="similarity">
    <text evidence="1">Belongs to the XseB family.</text>
</comment>
<comment type="sequence caution" evidence="2">
    <conflict type="erroneous initiation">
        <sequence resource="EMBL-CDS" id="BAB53567"/>
    </conflict>
</comment>
<proteinExistence type="inferred from homology"/>
<organism>
    <name type="scientific">Mesorhizobium japonicum (strain LMG 29417 / CECT 9101 / MAFF 303099)</name>
    <name type="common">Mesorhizobium loti (strain MAFF 303099)</name>
    <dbReference type="NCBI Taxonomy" id="266835"/>
    <lineage>
        <taxon>Bacteria</taxon>
        <taxon>Pseudomonadati</taxon>
        <taxon>Pseudomonadota</taxon>
        <taxon>Alphaproteobacteria</taxon>
        <taxon>Hyphomicrobiales</taxon>
        <taxon>Phyllobacteriaceae</taxon>
        <taxon>Mesorhizobium</taxon>
    </lineage>
</organism>
<feature type="chain" id="PRO_0000206992" description="Exodeoxyribonuclease 7 small subunit">
    <location>
        <begin position="1"/>
        <end position="83"/>
    </location>
</feature>
<sequence length="83" mass="9239">MAGETNEDVKAMSFEQALDALEKIVDDLERGDVPLDQSIRIYERGEALKAHCDRLLKAAEDKVEKIRLSRDGKPVGTEPLDAD</sequence>
<gene>
    <name evidence="1" type="primary">xseB</name>
    <name type="ordered locus">msr7470</name>
</gene>
<reference key="1">
    <citation type="journal article" date="2000" name="DNA Res.">
        <title>Complete genome structure of the nitrogen-fixing symbiotic bacterium Mesorhizobium loti.</title>
        <authorList>
            <person name="Kaneko T."/>
            <person name="Nakamura Y."/>
            <person name="Sato S."/>
            <person name="Asamizu E."/>
            <person name="Kato T."/>
            <person name="Sasamoto S."/>
            <person name="Watanabe A."/>
            <person name="Idesawa K."/>
            <person name="Ishikawa A."/>
            <person name="Kawashima K."/>
            <person name="Kimura T."/>
            <person name="Kishida Y."/>
            <person name="Kiyokawa C."/>
            <person name="Kohara M."/>
            <person name="Matsumoto M."/>
            <person name="Matsuno A."/>
            <person name="Mochizuki Y."/>
            <person name="Nakayama S."/>
            <person name="Nakazaki N."/>
            <person name="Shimpo S."/>
            <person name="Sugimoto M."/>
            <person name="Takeuchi C."/>
            <person name="Yamada M."/>
            <person name="Tabata S."/>
        </authorList>
    </citation>
    <scope>NUCLEOTIDE SEQUENCE [LARGE SCALE GENOMIC DNA]</scope>
    <source>
        <strain>LMG 29417 / CECT 9101 / MAFF 303099</strain>
    </source>
</reference>
<keyword id="KW-0963">Cytoplasm</keyword>
<keyword id="KW-0269">Exonuclease</keyword>
<keyword id="KW-0378">Hydrolase</keyword>
<keyword id="KW-0540">Nuclease</keyword>
<dbReference type="EC" id="3.1.11.6" evidence="1"/>
<dbReference type="EMBL" id="BA000012">
    <property type="protein sequence ID" value="BAB53567.1"/>
    <property type="status" value="ALT_INIT"/>
    <property type="molecule type" value="Genomic_DNA"/>
</dbReference>
<dbReference type="RefSeq" id="WP_013532792.1">
    <property type="nucleotide sequence ID" value="NC_002678.2"/>
</dbReference>
<dbReference type="SMR" id="Q985Y6"/>
<dbReference type="KEGG" id="mlo:msr7470"/>
<dbReference type="eggNOG" id="COG1722">
    <property type="taxonomic scope" value="Bacteria"/>
</dbReference>
<dbReference type="HOGENOM" id="CLU_145918_0_3_5"/>
<dbReference type="Proteomes" id="UP000000552">
    <property type="component" value="Chromosome"/>
</dbReference>
<dbReference type="GO" id="GO:0005829">
    <property type="term" value="C:cytosol"/>
    <property type="evidence" value="ECO:0007669"/>
    <property type="project" value="TreeGrafter"/>
</dbReference>
<dbReference type="GO" id="GO:0009318">
    <property type="term" value="C:exodeoxyribonuclease VII complex"/>
    <property type="evidence" value="ECO:0007669"/>
    <property type="project" value="InterPro"/>
</dbReference>
<dbReference type="GO" id="GO:0008855">
    <property type="term" value="F:exodeoxyribonuclease VII activity"/>
    <property type="evidence" value="ECO:0007669"/>
    <property type="project" value="UniProtKB-UniRule"/>
</dbReference>
<dbReference type="GO" id="GO:0006308">
    <property type="term" value="P:DNA catabolic process"/>
    <property type="evidence" value="ECO:0007669"/>
    <property type="project" value="UniProtKB-UniRule"/>
</dbReference>
<dbReference type="Gene3D" id="1.10.287.1040">
    <property type="entry name" value="Exonuclease VII, small subunit"/>
    <property type="match status" value="1"/>
</dbReference>
<dbReference type="HAMAP" id="MF_00337">
    <property type="entry name" value="Exonuc_7_S"/>
    <property type="match status" value="1"/>
</dbReference>
<dbReference type="InterPro" id="IPR003761">
    <property type="entry name" value="Exonuc_VII_S"/>
</dbReference>
<dbReference type="InterPro" id="IPR037004">
    <property type="entry name" value="Exonuc_VII_ssu_sf"/>
</dbReference>
<dbReference type="NCBIfam" id="NF002139">
    <property type="entry name" value="PRK00977.1-3"/>
    <property type="match status" value="1"/>
</dbReference>
<dbReference type="NCBIfam" id="TIGR01280">
    <property type="entry name" value="xseB"/>
    <property type="match status" value="1"/>
</dbReference>
<dbReference type="PANTHER" id="PTHR34137">
    <property type="entry name" value="EXODEOXYRIBONUCLEASE 7 SMALL SUBUNIT"/>
    <property type="match status" value="1"/>
</dbReference>
<dbReference type="PANTHER" id="PTHR34137:SF1">
    <property type="entry name" value="EXODEOXYRIBONUCLEASE 7 SMALL SUBUNIT"/>
    <property type="match status" value="1"/>
</dbReference>
<dbReference type="Pfam" id="PF02609">
    <property type="entry name" value="Exonuc_VII_S"/>
    <property type="match status" value="1"/>
</dbReference>
<dbReference type="SUPFAM" id="SSF116842">
    <property type="entry name" value="XseB-like"/>
    <property type="match status" value="1"/>
</dbReference>
<protein>
    <recommendedName>
        <fullName evidence="1">Exodeoxyribonuclease 7 small subunit</fullName>
        <ecNumber evidence="1">3.1.11.6</ecNumber>
    </recommendedName>
    <alternativeName>
        <fullName evidence="1">Exodeoxyribonuclease VII small subunit</fullName>
        <shortName evidence="1">Exonuclease VII small subunit</shortName>
    </alternativeName>
</protein>
<accession>Q985Y6</accession>